<name>RS15_LIMRJ</name>
<protein>
    <recommendedName>
        <fullName evidence="1">Small ribosomal subunit protein uS15</fullName>
    </recommendedName>
    <alternativeName>
        <fullName evidence="2">30S ribosomal protein S15</fullName>
    </alternativeName>
</protein>
<proteinExistence type="inferred from homology"/>
<organism>
    <name type="scientific">Limosilactobacillus reuteri subsp. reuteri (strain JCM 1112)</name>
    <name type="common">Lactobacillus reuteri</name>
    <dbReference type="NCBI Taxonomy" id="557433"/>
    <lineage>
        <taxon>Bacteria</taxon>
        <taxon>Bacillati</taxon>
        <taxon>Bacillota</taxon>
        <taxon>Bacilli</taxon>
        <taxon>Lactobacillales</taxon>
        <taxon>Lactobacillaceae</taxon>
        <taxon>Limosilactobacillus</taxon>
    </lineage>
</organism>
<feature type="chain" id="PRO_1000143133" description="Small ribosomal subunit protein uS15">
    <location>
        <begin position="1"/>
        <end position="89"/>
    </location>
</feature>
<accession>B2G6Q9</accession>
<dbReference type="EMBL" id="AP007281">
    <property type="protein sequence ID" value="BAG25141.1"/>
    <property type="molecule type" value="Genomic_DNA"/>
</dbReference>
<dbReference type="RefSeq" id="WP_003666833.1">
    <property type="nucleotide sequence ID" value="NC_010609.1"/>
</dbReference>
<dbReference type="SMR" id="B2G6Q9"/>
<dbReference type="GeneID" id="77190805"/>
<dbReference type="KEGG" id="lrf:LAR_0625"/>
<dbReference type="HOGENOM" id="CLU_148518_0_0_9"/>
<dbReference type="GO" id="GO:0022627">
    <property type="term" value="C:cytosolic small ribosomal subunit"/>
    <property type="evidence" value="ECO:0007669"/>
    <property type="project" value="TreeGrafter"/>
</dbReference>
<dbReference type="GO" id="GO:0019843">
    <property type="term" value="F:rRNA binding"/>
    <property type="evidence" value="ECO:0007669"/>
    <property type="project" value="UniProtKB-UniRule"/>
</dbReference>
<dbReference type="GO" id="GO:0003735">
    <property type="term" value="F:structural constituent of ribosome"/>
    <property type="evidence" value="ECO:0007669"/>
    <property type="project" value="InterPro"/>
</dbReference>
<dbReference type="GO" id="GO:0006412">
    <property type="term" value="P:translation"/>
    <property type="evidence" value="ECO:0007669"/>
    <property type="project" value="UniProtKB-UniRule"/>
</dbReference>
<dbReference type="CDD" id="cd00677">
    <property type="entry name" value="S15_NS1_EPRS_RNA-bind"/>
    <property type="match status" value="1"/>
</dbReference>
<dbReference type="FunFam" id="1.10.287.10:FF:000002">
    <property type="entry name" value="30S ribosomal protein S15"/>
    <property type="match status" value="1"/>
</dbReference>
<dbReference type="Gene3D" id="6.10.250.3130">
    <property type="match status" value="1"/>
</dbReference>
<dbReference type="Gene3D" id="1.10.287.10">
    <property type="entry name" value="S15/NS1, RNA-binding"/>
    <property type="match status" value="1"/>
</dbReference>
<dbReference type="HAMAP" id="MF_01343_B">
    <property type="entry name" value="Ribosomal_uS15_B"/>
    <property type="match status" value="1"/>
</dbReference>
<dbReference type="InterPro" id="IPR000589">
    <property type="entry name" value="Ribosomal_uS15"/>
</dbReference>
<dbReference type="InterPro" id="IPR005290">
    <property type="entry name" value="Ribosomal_uS15_bac-type"/>
</dbReference>
<dbReference type="InterPro" id="IPR009068">
    <property type="entry name" value="uS15_NS1_RNA-bd_sf"/>
</dbReference>
<dbReference type="NCBIfam" id="TIGR00952">
    <property type="entry name" value="S15_bact"/>
    <property type="match status" value="1"/>
</dbReference>
<dbReference type="PANTHER" id="PTHR23321">
    <property type="entry name" value="RIBOSOMAL PROTEIN S15, BACTERIAL AND ORGANELLAR"/>
    <property type="match status" value="1"/>
</dbReference>
<dbReference type="PANTHER" id="PTHR23321:SF26">
    <property type="entry name" value="SMALL RIBOSOMAL SUBUNIT PROTEIN US15M"/>
    <property type="match status" value="1"/>
</dbReference>
<dbReference type="Pfam" id="PF00312">
    <property type="entry name" value="Ribosomal_S15"/>
    <property type="match status" value="1"/>
</dbReference>
<dbReference type="SMART" id="SM01387">
    <property type="entry name" value="Ribosomal_S15"/>
    <property type="match status" value="1"/>
</dbReference>
<dbReference type="SUPFAM" id="SSF47060">
    <property type="entry name" value="S15/NS1 RNA-binding domain"/>
    <property type="match status" value="1"/>
</dbReference>
<dbReference type="PROSITE" id="PS00362">
    <property type="entry name" value="RIBOSOMAL_S15"/>
    <property type="match status" value="1"/>
</dbReference>
<keyword id="KW-0687">Ribonucleoprotein</keyword>
<keyword id="KW-0689">Ribosomal protein</keyword>
<keyword id="KW-0694">RNA-binding</keyword>
<keyword id="KW-0699">rRNA-binding</keyword>
<comment type="function">
    <text evidence="1">One of the primary rRNA binding proteins, it binds directly to 16S rRNA where it helps nucleate assembly of the platform of the 30S subunit by binding and bridging several RNA helices of the 16S rRNA.</text>
</comment>
<comment type="function">
    <text evidence="1">Forms an intersubunit bridge (bridge B4) with the 23S rRNA of the 50S subunit in the ribosome.</text>
</comment>
<comment type="subunit">
    <text evidence="1">Part of the 30S ribosomal subunit. Forms a bridge to the 50S subunit in the 70S ribosome, contacting the 23S rRNA.</text>
</comment>
<comment type="similarity">
    <text evidence="1">Belongs to the universal ribosomal protein uS15 family.</text>
</comment>
<reference key="1">
    <citation type="journal article" date="2008" name="DNA Res.">
        <title>Comparative genome analysis of Lactobacillus reuteri and Lactobacillus fermentum reveal a genomic island for reuterin and cobalamin production.</title>
        <authorList>
            <person name="Morita H."/>
            <person name="Toh H."/>
            <person name="Fukuda S."/>
            <person name="Horikawa H."/>
            <person name="Oshima K."/>
            <person name="Suzuki T."/>
            <person name="Murakami M."/>
            <person name="Hisamatsu S."/>
            <person name="Kato Y."/>
            <person name="Takizawa T."/>
            <person name="Fukuoka H."/>
            <person name="Yoshimura T."/>
            <person name="Itoh K."/>
            <person name="O'Sullivan D.J."/>
            <person name="McKay L.L."/>
            <person name="Ohno H."/>
            <person name="Kikuchi J."/>
            <person name="Masaoka T."/>
            <person name="Hattori M."/>
        </authorList>
    </citation>
    <scope>NUCLEOTIDE SEQUENCE [LARGE SCALE GENOMIC DNA]</scope>
    <source>
        <strain>JCM 1112</strain>
    </source>
</reference>
<evidence type="ECO:0000255" key="1">
    <source>
        <dbReference type="HAMAP-Rule" id="MF_01343"/>
    </source>
</evidence>
<evidence type="ECO:0000305" key="2"/>
<gene>
    <name evidence="1" type="primary">rpsO</name>
    <name type="ordered locus">LAR_0625</name>
</gene>
<sequence>MAISKERKDQIIKEFATHEGDTGSTQVQVAVLTADINELNDHLRTHKHDYHSQRGLMKKIGHRRNLLAYLRRTDLPAYRELIQKLGLRR</sequence>